<reference key="1">
    <citation type="journal article" date="2008" name="PLoS ONE">
        <title>Genome sequence of the saprophyte Leptospira biflexa provides insights into the evolution of Leptospira and the pathogenesis of leptospirosis.</title>
        <authorList>
            <person name="Picardeau M."/>
            <person name="Bulach D.M."/>
            <person name="Bouchier C."/>
            <person name="Zuerner R.L."/>
            <person name="Zidane N."/>
            <person name="Wilson P.J."/>
            <person name="Creno S."/>
            <person name="Kuczek E.S."/>
            <person name="Bommezzadri S."/>
            <person name="Davis J.C."/>
            <person name="McGrath A."/>
            <person name="Johnson M.J."/>
            <person name="Boursaux-Eude C."/>
            <person name="Seemann T."/>
            <person name="Rouy Z."/>
            <person name="Coppel R.L."/>
            <person name="Rood J.I."/>
            <person name="Lajus A."/>
            <person name="Davies J.K."/>
            <person name="Medigue C."/>
            <person name="Adler B."/>
        </authorList>
    </citation>
    <scope>NUCLEOTIDE SEQUENCE [LARGE SCALE GENOMIC DNA]</scope>
    <source>
        <strain evidence="4">Patoc 1 / ATCC 23582 / Paris</strain>
    </source>
</reference>
<reference evidence="5" key="2">
    <citation type="journal article" date="2014" name="Nature">
        <title>Structures of bacterial homologues of SWEET transporters in two distinct conformations.</title>
        <authorList>
            <person name="Xu Y."/>
            <person name="Tao Y."/>
            <person name="Cheung L.S."/>
            <person name="Fan C."/>
            <person name="Chen L.Q."/>
            <person name="Xu S."/>
            <person name="Perry K."/>
            <person name="Frommer W.B."/>
            <person name="Feng L."/>
        </authorList>
    </citation>
    <scope>X-RAY CRYSTALLOGRAPHY (2.39 ANGSTROMS)</scope>
    <scope>FUNCTION</scope>
    <scope>SUBCELLULAR LOCATION</scope>
    <scope>SUBUNIT</scope>
    <scope>MUTAGENESIS OF TRP-48 AND ASN-64</scope>
</reference>
<feature type="chain" id="PRO_0000432577" description="Sugar transporter SemiSWEET">
    <location>
        <begin position="1"/>
        <end position="85"/>
    </location>
</feature>
<feature type="transmembrane region" description="Helical; Name=1" evidence="2">
    <location>
        <begin position="5"/>
        <end position="25"/>
    </location>
</feature>
<feature type="transmembrane region" description="Helical; Name=2" evidence="2">
    <location>
        <begin position="33"/>
        <end position="53"/>
    </location>
</feature>
<feature type="transmembrane region" description="Helical; Name=3" evidence="2">
    <location>
        <begin position="57"/>
        <end position="77"/>
    </location>
</feature>
<feature type="domain" description="PQ-loop" evidence="1">
    <location>
        <begin position="2"/>
        <end position="59"/>
    </location>
</feature>
<feature type="mutagenesis site" description="Impairs glucose transport." evidence="2">
    <original>W</original>
    <variation>A</variation>
    <location>
        <position position="48"/>
    </location>
</feature>
<feature type="mutagenesis site" description="Impairs glucose transport." evidence="2">
    <original>N</original>
    <variation>A</variation>
    <location>
        <position position="64"/>
    </location>
</feature>
<feature type="helix" evidence="6">
    <location>
        <begin position="2"/>
        <end position="15"/>
    </location>
</feature>
<feature type="helix" evidence="6">
    <location>
        <begin position="17"/>
        <end position="27"/>
    </location>
</feature>
<feature type="turn" evidence="7">
    <location>
        <begin position="29"/>
        <end position="32"/>
    </location>
</feature>
<feature type="helix" evidence="6">
    <location>
        <begin position="35"/>
        <end position="55"/>
    </location>
</feature>
<feature type="helix" evidence="6">
    <location>
        <begin position="58"/>
        <end position="79"/>
    </location>
</feature>
<sequence>MENLIGYVAAFLTTVSFLPQVLRVVMTKQTRDISRNMYIMFFLGVVLWFVYGILRSDLPIILANVVTLFFVTIILYYKLTEGNQT</sequence>
<keyword id="KW-0002">3D-structure</keyword>
<keyword id="KW-1003">Cell membrane</keyword>
<keyword id="KW-0472">Membrane</keyword>
<keyword id="KW-1185">Reference proteome</keyword>
<keyword id="KW-0762">Sugar transport</keyword>
<keyword id="KW-0812">Transmembrane</keyword>
<keyword id="KW-1133">Transmembrane helix</keyword>
<keyword id="KW-0813">Transport</keyword>
<protein>
    <recommendedName>
        <fullName>Sugar transporter SemiSWEET</fullName>
    </recommendedName>
</protein>
<dbReference type="EMBL" id="CP000786">
    <property type="protein sequence ID" value="ABZ97720.1"/>
    <property type="molecule type" value="Genomic_DNA"/>
</dbReference>
<dbReference type="RefSeq" id="WP_012388598.1">
    <property type="nucleotide sequence ID" value="NC_010602.1"/>
</dbReference>
<dbReference type="PDB" id="4QNC">
    <property type="method" value="X-ray"/>
    <property type="resolution" value="2.39 A"/>
    <property type="chains" value="A/B=1-85"/>
</dbReference>
<dbReference type="PDB" id="5UHQ">
    <property type="method" value="X-ray"/>
    <property type="resolution" value="2.78 A"/>
    <property type="chains" value="A/B/C/D=1-85"/>
</dbReference>
<dbReference type="PDB" id="5UHS">
    <property type="method" value="X-ray"/>
    <property type="resolution" value="2.80 A"/>
    <property type="chains" value="A/B=1-85"/>
</dbReference>
<dbReference type="PDBsum" id="4QNC"/>
<dbReference type="PDBsum" id="5UHQ"/>
<dbReference type="PDBsum" id="5UHS"/>
<dbReference type="SMR" id="B0SR19"/>
<dbReference type="DIP" id="DIP-61074N"/>
<dbReference type="STRING" id="456481.LEPBI_I1613"/>
<dbReference type="KEGG" id="lbi:LEPBI_I1613"/>
<dbReference type="HOGENOM" id="CLU_135915_1_1_12"/>
<dbReference type="OrthoDB" id="9814012at2"/>
<dbReference type="BioCyc" id="LBIF456481:LEPBI_RS07960-MONOMER"/>
<dbReference type="EvolutionaryTrace" id="B0SR19"/>
<dbReference type="Proteomes" id="UP000001847">
    <property type="component" value="Chromosome I"/>
</dbReference>
<dbReference type="GO" id="GO:0016020">
    <property type="term" value="C:membrane"/>
    <property type="evidence" value="ECO:0000314"/>
    <property type="project" value="UniProtKB"/>
</dbReference>
<dbReference type="GO" id="GO:0005886">
    <property type="term" value="C:plasma membrane"/>
    <property type="evidence" value="ECO:0007669"/>
    <property type="project" value="UniProtKB-SubCell"/>
</dbReference>
<dbReference type="GO" id="GO:0055056">
    <property type="term" value="F:D-glucose transmembrane transporter activity"/>
    <property type="evidence" value="ECO:0000315"/>
    <property type="project" value="UniProtKB"/>
</dbReference>
<dbReference type="GO" id="GO:0042803">
    <property type="term" value="F:protein homodimerization activity"/>
    <property type="evidence" value="ECO:0000353"/>
    <property type="project" value="UniProtKB"/>
</dbReference>
<dbReference type="GO" id="GO:1904659">
    <property type="term" value="P:D-glucose transmembrane transport"/>
    <property type="evidence" value="ECO:0000315"/>
    <property type="project" value="UniProtKB"/>
</dbReference>
<dbReference type="FunFam" id="1.20.1280.290:FF:000042">
    <property type="entry name" value="Sugar transporter SemiSWEET"/>
    <property type="match status" value="1"/>
</dbReference>
<dbReference type="Gene3D" id="1.20.1280.290">
    <property type="match status" value="1"/>
</dbReference>
<dbReference type="InterPro" id="IPR006603">
    <property type="entry name" value="PQ-loop_rpt"/>
</dbReference>
<dbReference type="InterPro" id="IPR047662">
    <property type="entry name" value="SemiSWEET"/>
</dbReference>
<dbReference type="NCBIfam" id="NF037968">
    <property type="entry name" value="SemiSWEET_2"/>
    <property type="match status" value="1"/>
</dbReference>
<dbReference type="Pfam" id="PF04193">
    <property type="entry name" value="PQ-loop"/>
    <property type="match status" value="1"/>
</dbReference>
<name>SWEET_LEPBP</name>
<accession>B0SR19</accession>
<proteinExistence type="evidence at protein level"/>
<organism>
    <name type="scientific">Leptospira biflexa serovar Patoc (strain Patoc 1 / ATCC 23582 / Paris)</name>
    <dbReference type="NCBI Taxonomy" id="456481"/>
    <lineage>
        <taxon>Bacteria</taxon>
        <taxon>Pseudomonadati</taxon>
        <taxon>Spirochaetota</taxon>
        <taxon>Spirochaetia</taxon>
        <taxon>Leptospirales</taxon>
        <taxon>Leptospiraceae</taxon>
        <taxon>Leptospira</taxon>
    </lineage>
</organism>
<comment type="function">
    <text evidence="2">The homodimer mediates transmembrane sugar transport down a concentration gradient. Transport is probably effected by rocking-type movements, where a cargo-binding cavity opens first on one and then on the other side of the membrane.</text>
</comment>
<comment type="subunit">
    <text evidence="2">Homodimer.</text>
</comment>
<comment type="subcellular location">
    <subcellularLocation>
        <location evidence="2">Cell membrane</location>
        <topology evidence="2">Multi-pass membrane protein</topology>
    </subcellularLocation>
</comment>
<gene>
    <name evidence="3" type="ordered locus">LEPBI_I1613</name>
</gene>
<evidence type="ECO:0000255" key="1"/>
<evidence type="ECO:0000269" key="2">
    <source>
    </source>
</evidence>
<evidence type="ECO:0000312" key="3">
    <source>
        <dbReference type="EMBL" id="ABZ97720.1"/>
    </source>
</evidence>
<evidence type="ECO:0000312" key="4">
    <source>
        <dbReference type="Proteomes" id="UP000001847"/>
    </source>
</evidence>
<evidence type="ECO:0007744" key="5">
    <source>
        <dbReference type="PDB" id="4QNC"/>
    </source>
</evidence>
<evidence type="ECO:0007829" key="6">
    <source>
        <dbReference type="PDB" id="4QNC"/>
    </source>
</evidence>
<evidence type="ECO:0007829" key="7">
    <source>
        <dbReference type="PDB" id="5UHQ"/>
    </source>
</evidence>